<accession>A7FFD1</accession>
<sequence>MAYRLLRALFRGLFRVTIDGVTDQFKHEKLIITPNHVSFLDGALLALFLPIKPVFAVYTSITDTWYMRWLKPYVDFVALDPTNPMAIKHLVRMVEQGRPVVIFPEGRITVTGSLMKIYDGAAFVAAKSGAAVVPIRLDGPEFTHFGRLQGVLKTRWFPKISIHVLPATTIPMPQAPRSRERRVLAGEHLHTIMMAARMATVPRETLFEALLSAQTRYGRFKPCIEDVSFKEDSYQTLLKKTLGVSRILQRFTVPGEHVGMLLPNATITAAAIFGASLRGRIPALLNYTSGAKGLQSAIIAASLKTIVTSRQFLEKGKLTHLPEQVNEVNWVYLEDLKDTVTLTDKLWILFHLCFPRRAMLPQQADDSALILFTSGSEGNPKGVVHSHASLLANVEQIRTIADFTPRDRFMSSLPLFHAFGLTVGLFTPLMTGSRVFLYPSPLHYRVVPELVYDRNCTVLFGTSTFLGNYARFAHPYDFARVRYVVAGAEKLAESTKQIWQDKFGIRILEGYGVTECAPVVAINVPMAAKVNTVGRILPGMEARLINVPGIAQGGRLQLRGPNIMRGYLRVENPGVLEQPSAENAQGELDANWYDTGDIVTLDEQGFCAIRGRVKRFAKLAGEMVSLESVEQLAISLSPEGQHAAAAKTDSAKGEALVLFTTDSEITRERLIKAARENGVPELAVPRDIRVVKALPLLGSGKPDFVTLGKMAQDPEMSV</sequence>
<proteinExistence type="inferred from homology"/>
<protein>
    <recommendedName>
        <fullName evidence="1">Bifunctional protein Aas</fullName>
    </recommendedName>
    <domain>
        <recommendedName>
            <fullName evidence="1">2-acylglycerophosphoethanolamine acyltransferase</fullName>
            <ecNumber evidence="1">2.3.1.40</ecNumber>
        </recommendedName>
        <alternativeName>
            <fullName evidence="1">2-acyl-GPE acyltransferase</fullName>
        </alternativeName>
        <alternativeName>
            <fullName evidence="1">Acyl-[acyl-carrier-protein]--phospholipid O-acyltransferase</fullName>
        </alternativeName>
    </domain>
    <domain>
        <recommendedName>
            <fullName evidence="1">Acyl-[acyl-carrier-protein] synthetase</fullName>
            <ecNumber evidence="1">6.2.1.20</ecNumber>
        </recommendedName>
        <alternativeName>
            <fullName evidence="1">Acyl-ACP synthetase</fullName>
        </alternativeName>
        <alternativeName>
            <fullName evidence="1">Long-chain-fatty-acid--[acyl-carrier-protein] ligase</fullName>
        </alternativeName>
    </domain>
</protein>
<keyword id="KW-0012">Acyltransferase</keyword>
<keyword id="KW-0067">ATP-binding</keyword>
<keyword id="KW-0997">Cell inner membrane</keyword>
<keyword id="KW-1003">Cell membrane</keyword>
<keyword id="KW-0436">Ligase</keyword>
<keyword id="KW-0472">Membrane</keyword>
<keyword id="KW-0511">Multifunctional enzyme</keyword>
<keyword id="KW-0547">Nucleotide-binding</keyword>
<keyword id="KW-0808">Transferase</keyword>
<keyword id="KW-0812">Transmembrane</keyword>
<keyword id="KW-1133">Transmembrane helix</keyword>
<comment type="function">
    <text evidence="1">Plays a role in lysophospholipid acylation. Transfers fatty acids to the 1-position via an enzyme-bound acyl-ACP intermediate in the presence of ATP and magnesium. Its physiological function is to regenerate phosphatidylethanolamine from 2-acyl-glycero-3-phosphoethanolamine (2-acyl-GPE) formed by transacylation reactions or degradation by phospholipase A1.</text>
</comment>
<comment type="catalytic activity">
    <reaction evidence="1">
        <text>a 2-acyl-sn-glycero-3-phosphoethanolamine + a fatty acyl-[ACP] = a 1,2-diacyl-sn-glycero-3-phosphoethanolamine + holo-[ACP]</text>
        <dbReference type="Rhea" id="RHEA:10304"/>
        <dbReference type="Rhea" id="RHEA-COMP:9685"/>
        <dbReference type="Rhea" id="RHEA-COMP:14125"/>
        <dbReference type="ChEBI" id="CHEBI:64479"/>
        <dbReference type="ChEBI" id="CHEBI:64612"/>
        <dbReference type="ChEBI" id="CHEBI:65213"/>
        <dbReference type="ChEBI" id="CHEBI:138651"/>
        <dbReference type="EC" id="2.3.1.40"/>
    </reaction>
</comment>
<comment type="catalytic activity">
    <reaction evidence="1">
        <text>a long-chain fatty acid + holo-[ACP] + ATP = a long-chain fatty acyl-[ACP] + AMP + diphosphate</text>
        <dbReference type="Rhea" id="RHEA:45588"/>
        <dbReference type="Rhea" id="RHEA-COMP:9685"/>
        <dbReference type="Rhea" id="RHEA-COMP:12682"/>
        <dbReference type="ChEBI" id="CHEBI:30616"/>
        <dbReference type="ChEBI" id="CHEBI:33019"/>
        <dbReference type="ChEBI" id="CHEBI:57560"/>
        <dbReference type="ChEBI" id="CHEBI:64479"/>
        <dbReference type="ChEBI" id="CHEBI:133243"/>
        <dbReference type="ChEBI" id="CHEBI:456215"/>
        <dbReference type="EC" id="6.2.1.20"/>
    </reaction>
</comment>
<comment type="subcellular location">
    <subcellularLocation>
        <location evidence="1">Cell inner membrane</location>
        <topology evidence="1">Multi-pass membrane protein</topology>
    </subcellularLocation>
</comment>
<comment type="similarity">
    <text evidence="1">In the N-terminal section; belongs to the 2-acyl-GPE acetyltransferase family.</text>
</comment>
<comment type="similarity">
    <text evidence="1">In the C-terminal section; belongs to the ATP-dependent AMP-binding enzyme family.</text>
</comment>
<organism>
    <name type="scientific">Yersinia pseudotuberculosis serotype O:1b (strain IP 31758)</name>
    <dbReference type="NCBI Taxonomy" id="349747"/>
    <lineage>
        <taxon>Bacteria</taxon>
        <taxon>Pseudomonadati</taxon>
        <taxon>Pseudomonadota</taxon>
        <taxon>Gammaproteobacteria</taxon>
        <taxon>Enterobacterales</taxon>
        <taxon>Yersiniaceae</taxon>
        <taxon>Yersinia</taxon>
    </lineage>
</organism>
<gene>
    <name evidence="1" type="primary">aas</name>
    <name type="ordered locus">YpsIP31758_0975</name>
</gene>
<feature type="chain" id="PRO_1000065646" description="Bifunctional protein Aas">
    <location>
        <begin position="1"/>
        <end position="718"/>
    </location>
</feature>
<feature type="transmembrane region" description="Helical" evidence="1">
    <location>
        <begin position="258"/>
        <end position="277"/>
    </location>
</feature>
<feature type="transmembrane region" description="Helical" evidence="1">
    <location>
        <begin position="409"/>
        <end position="433"/>
    </location>
</feature>
<feature type="region of interest" description="Acyltransferase">
    <location>
        <begin position="15"/>
        <end position="138"/>
    </location>
</feature>
<feature type="region of interest" description="AMP-binding">
    <location>
        <begin position="233"/>
        <end position="646"/>
    </location>
</feature>
<feature type="active site" evidence="1">
    <location>
        <position position="36"/>
    </location>
</feature>
<name>AAS_YERP3</name>
<evidence type="ECO:0000255" key="1">
    <source>
        <dbReference type="HAMAP-Rule" id="MF_01162"/>
    </source>
</evidence>
<dbReference type="EC" id="2.3.1.40" evidence="1"/>
<dbReference type="EC" id="6.2.1.20" evidence="1"/>
<dbReference type="EMBL" id="CP000720">
    <property type="protein sequence ID" value="ABS47582.1"/>
    <property type="molecule type" value="Genomic_DNA"/>
</dbReference>
<dbReference type="RefSeq" id="WP_011192876.1">
    <property type="nucleotide sequence ID" value="NC_009708.1"/>
</dbReference>
<dbReference type="SMR" id="A7FFD1"/>
<dbReference type="GeneID" id="49784936"/>
<dbReference type="KEGG" id="ypi:YpsIP31758_0975"/>
<dbReference type="HOGENOM" id="CLU_000022_59_8_6"/>
<dbReference type="Proteomes" id="UP000002412">
    <property type="component" value="Chromosome"/>
</dbReference>
<dbReference type="GO" id="GO:0005886">
    <property type="term" value="C:plasma membrane"/>
    <property type="evidence" value="ECO:0007669"/>
    <property type="project" value="UniProtKB-SubCell"/>
</dbReference>
<dbReference type="GO" id="GO:0008779">
    <property type="term" value="F:acyl-[acyl-carrier-protein]-phospholipid O-acyltransferase activity"/>
    <property type="evidence" value="ECO:0007669"/>
    <property type="project" value="UniProtKB-UniRule"/>
</dbReference>
<dbReference type="GO" id="GO:0005524">
    <property type="term" value="F:ATP binding"/>
    <property type="evidence" value="ECO:0007669"/>
    <property type="project" value="UniProtKB-KW"/>
</dbReference>
<dbReference type="GO" id="GO:0008922">
    <property type="term" value="F:long-chain fatty acid [acyl-carrier-protein] ligase activity"/>
    <property type="evidence" value="ECO:0007669"/>
    <property type="project" value="UniProtKB-UniRule"/>
</dbReference>
<dbReference type="GO" id="GO:0031956">
    <property type="term" value="F:medium-chain fatty acid-CoA ligase activity"/>
    <property type="evidence" value="ECO:0007669"/>
    <property type="project" value="TreeGrafter"/>
</dbReference>
<dbReference type="GO" id="GO:0006631">
    <property type="term" value="P:fatty acid metabolic process"/>
    <property type="evidence" value="ECO:0007669"/>
    <property type="project" value="InterPro"/>
</dbReference>
<dbReference type="GO" id="GO:0008654">
    <property type="term" value="P:phospholipid biosynthetic process"/>
    <property type="evidence" value="ECO:0007669"/>
    <property type="project" value="InterPro"/>
</dbReference>
<dbReference type="CDD" id="cd07989">
    <property type="entry name" value="LPLAT_AGPAT-like"/>
    <property type="match status" value="1"/>
</dbReference>
<dbReference type="Gene3D" id="3.30.300.30">
    <property type="match status" value="1"/>
</dbReference>
<dbReference type="Gene3D" id="3.40.50.12780">
    <property type="entry name" value="N-terminal domain of ligase-like"/>
    <property type="match status" value="1"/>
</dbReference>
<dbReference type="HAMAP" id="MF_01162">
    <property type="entry name" value="Aas"/>
    <property type="match status" value="1"/>
</dbReference>
<dbReference type="InterPro" id="IPR023775">
    <property type="entry name" value="Aas"/>
</dbReference>
<dbReference type="InterPro" id="IPR025110">
    <property type="entry name" value="AMP-bd_C"/>
</dbReference>
<dbReference type="InterPro" id="IPR045851">
    <property type="entry name" value="AMP-bd_C_sf"/>
</dbReference>
<dbReference type="InterPro" id="IPR020845">
    <property type="entry name" value="AMP-binding_CS"/>
</dbReference>
<dbReference type="InterPro" id="IPR000873">
    <property type="entry name" value="AMP-dep_synth/lig_dom"/>
</dbReference>
<dbReference type="InterPro" id="IPR042099">
    <property type="entry name" value="ANL_N_sf"/>
</dbReference>
<dbReference type="InterPro" id="IPR002123">
    <property type="entry name" value="Plipid/glycerol_acylTrfase"/>
</dbReference>
<dbReference type="NCBIfam" id="NF005959">
    <property type="entry name" value="PRK08043.1"/>
    <property type="match status" value="1"/>
</dbReference>
<dbReference type="PANTHER" id="PTHR43201">
    <property type="entry name" value="ACYL-COA SYNTHETASE"/>
    <property type="match status" value="1"/>
</dbReference>
<dbReference type="PANTHER" id="PTHR43201:SF5">
    <property type="entry name" value="MEDIUM-CHAIN ACYL-COA LIGASE ACSF2, MITOCHONDRIAL"/>
    <property type="match status" value="1"/>
</dbReference>
<dbReference type="Pfam" id="PF01553">
    <property type="entry name" value="Acyltransferase"/>
    <property type="match status" value="1"/>
</dbReference>
<dbReference type="Pfam" id="PF00501">
    <property type="entry name" value="AMP-binding"/>
    <property type="match status" value="1"/>
</dbReference>
<dbReference type="Pfam" id="PF13193">
    <property type="entry name" value="AMP-binding_C"/>
    <property type="match status" value="1"/>
</dbReference>
<dbReference type="SMART" id="SM00563">
    <property type="entry name" value="PlsC"/>
    <property type="match status" value="1"/>
</dbReference>
<dbReference type="SUPFAM" id="SSF56801">
    <property type="entry name" value="Acetyl-CoA synthetase-like"/>
    <property type="match status" value="1"/>
</dbReference>
<dbReference type="SUPFAM" id="SSF69593">
    <property type="entry name" value="Glycerol-3-phosphate (1)-acyltransferase"/>
    <property type="match status" value="1"/>
</dbReference>
<dbReference type="PROSITE" id="PS00455">
    <property type="entry name" value="AMP_BINDING"/>
    <property type="match status" value="1"/>
</dbReference>
<reference key="1">
    <citation type="journal article" date="2007" name="PLoS Genet.">
        <title>The complete genome sequence of Yersinia pseudotuberculosis IP31758, the causative agent of Far East scarlet-like fever.</title>
        <authorList>
            <person name="Eppinger M."/>
            <person name="Rosovitz M.J."/>
            <person name="Fricke W.F."/>
            <person name="Rasko D.A."/>
            <person name="Kokorina G."/>
            <person name="Fayolle C."/>
            <person name="Lindler L.E."/>
            <person name="Carniel E."/>
            <person name="Ravel J."/>
        </authorList>
    </citation>
    <scope>NUCLEOTIDE SEQUENCE [LARGE SCALE GENOMIC DNA]</scope>
    <source>
        <strain>IP 31758</strain>
    </source>
</reference>